<proteinExistence type="inferred from homology"/>
<comment type="function">
    <text evidence="1">Catalyzes the condensation reaction of fatty acid synthesis by the addition to an acyl acceptor of two carbons from malonyl-ACP. Catalyzes the first condensation reaction which initiates fatty acid synthesis and may therefore play a role in governing the total rate of fatty acid production. Possesses both acetoacetyl-ACP synthase and acetyl transacylase activities. Its substrate specificity determines the biosynthesis of branched-chain and/or straight-chain of fatty acids.</text>
</comment>
<comment type="catalytic activity">
    <reaction evidence="1">
        <text>malonyl-[ACP] + acetyl-CoA + H(+) = 3-oxobutanoyl-[ACP] + CO2 + CoA</text>
        <dbReference type="Rhea" id="RHEA:12080"/>
        <dbReference type="Rhea" id="RHEA-COMP:9623"/>
        <dbReference type="Rhea" id="RHEA-COMP:9625"/>
        <dbReference type="ChEBI" id="CHEBI:15378"/>
        <dbReference type="ChEBI" id="CHEBI:16526"/>
        <dbReference type="ChEBI" id="CHEBI:57287"/>
        <dbReference type="ChEBI" id="CHEBI:57288"/>
        <dbReference type="ChEBI" id="CHEBI:78449"/>
        <dbReference type="ChEBI" id="CHEBI:78450"/>
        <dbReference type="EC" id="2.3.1.180"/>
    </reaction>
</comment>
<comment type="pathway">
    <text evidence="1">Lipid metabolism; fatty acid biosynthesis.</text>
</comment>
<comment type="subunit">
    <text evidence="1">Homodimer.</text>
</comment>
<comment type="subcellular location">
    <subcellularLocation>
        <location evidence="1">Cytoplasm</location>
    </subcellularLocation>
</comment>
<comment type="domain">
    <text evidence="1">The last Arg residue of the ACP-binding site is essential for the weak association between ACP/AcpP and FabH.</text>
</comment>
<comment type="similarity">
    <text evidence="1">Belongs to the thiolase-like superfamily. FabH family.</text>
</comment>
<keyword id="KW-0012">Acyltransferase</keyword>
<keyword id="KW-0963">Cytoplasm</keyword>
<keyword id="KW-0275">Fatty acid biosynthesis</keyword>
<keyword id="KW-0276">Fatty acid metabolism</keyword>
<keyword id="KW-0444">Lipid biosynthesis</keyword>
<keyword id="KW-0443">Lipid metabolism</keyword>
<keyword id="KW-0511">Multifunctional enzyme</keyword>
<keyword id="KW-0808">Transferase</keyword>
<feature type="chain" id="PRO_1000056397" description="Beta-ketoacyl-[acyl-carrier-protein] synthase III">
    <location>
        <begin position="1"/>
        <end position="323"/>
    </location>
</feature>
<feature type="region of interest" description="ACP-binding" evidence="1">
    <location>
        <begin position="251"/>
        <end position="255"/>
    </location>
</feature>
<feature type="active site" evidence="1">
    <location>
        <position position="114"/>
    </location>
</feature>
<feature type="active site" evidence="1">
    <location>
        <position position="250"/>
    </location>
</feature>
<feature type="active site" evidence="1">
    <location>
        <position position="280"/>
    </location>
</feature>
<accession>A4WTT9</accession>
<reference key="1">
    <citation type="submission" date="2007-04" db="EMBL/GenBank/DDBJ databases">
        <title>Complete sequence of chromosome of Rhodobacter sphaeroides ATCC 17025.</title>
        <authorList>
            <consortium name="US DOE Joint Genome Institute"/>
            <person name="Copeland A."/>
            <person name="Lucas S."/>
            <person name="Lapidus A."/>
            <person name="Barry K."/>
            <person name="Detter J.C."/>
            <person name="Glavina del Rio T."/>
            <person name="Hammon N."/>
            <person name="Israni S."/>
            <person name="Dalin E."/>
            <person name="Tice H."/>
            <person name="Pitluck S."/>
            <person name="Chertkov O."/>
            <person name="Brettin T."/>
            <person name="Bruce D."/>
            <person name="Han C."/>
            <person name="Schmutz J."/>
            <person name="Larimer F."/>
            <person name="Land M."/>
            <person name="Hauser L."/>
            <person name="Kyrpides N."/>
            <person name="Kim E."/>
            <person name="Richardson P."/>
            <person name="Mackenzie C."/>
            <person name="Choudhary M."/>
            <person name="Donohue T.J."/>
            <person name="Kaplan S."/>
        </authorList>
    </citation>
    <scope>NUCLEOTIDE SEQUENCE [LARGE SCALE GENOMIC DNA]</scope>
    <source>
        <strain>ATCC 17025 / ATH 2.4.3</strain>
    </source>
</reference>
<sequence>MTIRAVVRGVGHYLPDRIVPNSELEALVETTDEWIRTRSGIERRHFAAEGQTTSDLAARAARAALADAGLQPDDIDTLIVATSTADLTFPSAATMVQAALGMSRGFAFDVQAVCAGFVYALANADALIRSGQANRVLVIGAETFSRLMDWSDRATCVLFGDGAGALVLEGAEGAGTSADRGILATDLHSDGRFKDLLYVDGGASTGSTGHLRMQGREVFRHAVEKLAETAHTALDKAGLTSADVDWIVPHQANLRIISATAQRMQVPMDRVILTVQDHGNTSAASIPLALSVGKARGQIKEGDLLVTEAIGGGLAWGSVVLRW</sequence>
<evidence type="ECO:0000255" key="1">
    <source>
        <dbReference type="HAMAP-Rule" id="MF_01815"/>
    </source>
</evidence>
<protein>
    <recommendedName>
        <fullName evidence="1">Beta-ketoacyl-[acyl-carrier-protein] synthase III</fullName>
        <shortName evidence="1">Beta-ketoacyl-ACP synthase III</shortName>
        <shortName evidence="1">KAS III</shortName>
        <ecNumber evidence="1">2.3.1.180</ecNumber>
    </recommendedName>
    <alternativeName>
        <fullName evidence="1">3-oxoacyl-[acyl-carrier-protein] synthase 3</fullName>
    </alternativeName>
    <alternativeName>
        <fullName evidence="1">3-oxoacyl-[acyl-carrier-protein] synthase III</fullName>
    </alternativeName>
</protein>
<organism>
    <name type="scientific">Cereibacter sphaeroides (strain ATCC 17025 / ATH 2.4.3)</name>
    <name type="common">Rhodobacter sphaeroides</name>
    <dbReference type="NCBI Taxonomy" id="349102"/>
    <lineage>
        <taxon>Bacteria</taxon>
        <taxon>Pseudomonadati</taxon>
        <taxon>Pseudomonadota</taxon>
        <taxon>Alphaproteobacteria</taxon>
        <taxon>Rhodobacterales</taxon>
        <taxon>Paracoccaceae</taxon>
        <taxon>Cereibacter</taxon>
    </lineage>
</organism>
<dbReference type="EC" id="2.3.1.180" evidence="1"/>
<dbReference type="EMBL" id="CP000661">
    <property type="protein sequence ID" value="ABP70803.1"/>
    <property type="molecule type" value="Genomic_DNA"/>
</dbReference>
<dbReference type="SMR" id="A4WTT9"/>
<dbReference type="STRING" id="349102.Rsph17025_1912"/>
<dbReference type="KEGG" id="rsq:Rsph17025_1912"/>
<dbReference type="eggNOG" id="COG0332">
    <property type="taxonomic scope" value="Bacteria"/>
</dbReference>
<dbReference type="HOGENOM" id="CLU_039592_3_1_5"/>
<dbReference type="BioCyc" id="RSPH349102:G1G8M-1977-MONOMER"/>
<dbReference type="UniPathway" id="UPA00094"/>
<dbReference type="GO" id="GO:0005737">
    <property type="term" value="C:cytoplasm"/>
    <property type="evidence" value="ECO:0007669"/>
    <property type="project" value="UniProtKB-SubCell"/>
</dbReference>
<dbReference type="GO" id="GO:0004315">
    <property type="term" value="F:3-oxoacyl-[acyl-carrier-protein] synthase activity"/>
    <property type="evidence" value="ECO:0007669"/>
    <property type="project" value="InterPro"/>
</dbReference>
<dbReference type="GO" id="GO:0033818">
    <property type="term" value="F:beta-ketoacyl-acyl-carrier-protein synthase III activity"/>
    <property type="evidence" value="ECO:0007669"/>
    <property type="project" value="UniProtKB-UniRule"/>
</dbReference>
<dbReference type="GO" id="GO:0006633">
    <property type="term" value="P:fatty acid biosynthetic process"/>
    <property type="evidence" value="ECO:0007669"/>
    <property type="project" value="UniProtKB-UniRule"/>
</dbReference>
<dbReference type="GO" id="GO:0044550">
    <property type="term" value="P:secondary metabolite biosynthetic process"/>
    <property type="evidence" value="ECO:0007669"/>
    <property type="project" value="TreeGrafter"/>
</dbReference>
<dbReference type="CDD" id="cd00830">
    <property type="entry name" value="KAS_III"/>
    <property type="match status" value="1"/>
</dbReference>
<dbReference type="FunFam" id="3.40.47.10:FF:000004">
    <property type="entry name" value="3-oxoacyl-[acyl-carrier-protein] synthase 3"/>
    <property type="match status" value="1"/>
</dbReference>
<dbReference type="Gene3D" id="3.40.47.10">
    <property type="match status" value="1"/>
</dbReference>
<dbReference type="HAMAP" id="MF_01815">
    <property type="entry name" value="FabH"/>
    <property type="match status" value="1"/>
</dbReference>
<dbReference type="InterPro" id="IPR013747">
    <property type="entry name" value="ACP_syn_III_C"/>
</dbReference>
<dbReference type="InterPro" id="IPR013751">
    <property type="entry name" value="ACP_syn_III_N"/>
</dbReference>
<dbReference type="InterPro" id="IPR004655">
    <property type="entry name" value="FabH"/>
</dbReference>
<dbReference type="InterPro" id="IPR016039">
    <property type="entry name" value="Thiolase-like"/>
</dbReference>
<dbReference type="NCBIfam" id="TIGR00747">
    <property type="entry name" value="fabH"/>
    <property type="match status" value="1"/>
</dbReference>
<dbReference type="NCBIfam" id="NF006829">
    <property type="entry name" value="PRK09352.1"/>
    <property type="match status" value="1"/>
</dbReference>
<dbReference type="PANTHER" id="PTHR34069">
    <property type="entry name" value="3-OXOACYL-[ACYL-CARRIER-PROTEIN] SYNTHASE 3"/>
    <property type="match status" value="1"/>
</dbReference>
<dbReference type="PANTHER" id="PTHR34069:SF2">
    <property type="entry name" value="BETA-KETOACYL-[ACYL-CARRIER-PROTEIN] SYNTHASE III"/>
    <property type="match status" value="1"/>
</dbReference>
<dbReference type="Pfam" id="PF08545">
    <property type="entry name" value="ACP_syn_III"/>
    <property type="match status" value="1"/>
</dbReference>
<dbReference type="Pfam" id="PF08541">
    <property type="entry name" value="ACP_syn_III_C"/>
    <property type="match status" value="1"/>
</dbReference>
<dbReference type="SUPFAM" id="SSF53901">
    <property type="entry name" value="Thiolase-like"/>
    <property type="match status" value="1"/>
</dbReference>
<gene>
    <name evidence="1" type="primary">fabH</name>
    <name type="ordered locus">Rsph17025_1912</name>
</gene>
<name>FABH_CERS5</name>